<dbReference type="EC" id="2.3.1.234" evidence="1"/>
<dbReference type="EMBL" id="AE017354">
    <property type="protein sequence ID" value="AAU28419.1"/>
    <property type="molecule type" value="Genomic_DNA"/>
</dbReference>
<dbReference type="RefSeq" id="WP_010948063.1">
    <property type="nucleotide sequence ID" value="NC_002942.5"/>
</dbReference>
<dbReference type="RefSeq" id="YP_096366.1">
    <property type="nucleotide sequence ID" value="NC_002942.5"/>
</dbReference>
<dbReference type="SMR" id="Q5ZT08"/>
<dbReference type="STRING" id="272624.lpg2357"/>
<dbReference type="PaxDb" id="272624-lpg2357"/>
<dbReference type="GeneID" id="57036350"/>
<dbReference type="KEGG" id="lpn:lpg2357"/>
<dbReference type="PATRIC" id="fig|272624.6.peg.2479"/>
<dbReference type="eggNOG" id="COG0533">
    <property type="taxonomic scope" value="Bacteria"/>
</dbReference>
<dbReference type="HOGENOM" id="CLU_023208_0_0_6"/>
<dbReference type="OrthoDB" id="9806197at2"/>
<dbReference type="Proteomes" id="UP000000609">
    <property type="component" value="Chromosome"/>
</dbReference>
<dbReference type="GO" id="GO:0005737">
    <property type="term" value="C:cytoplasm"/>
    <property type="evidence" value="ECO:0007669"/>
    <property type="project" value="UniProtKB-SubCell"/>
</dbReference>
<dbReference type="GO" id="GO:0005506">
    <property type="term" value="F:iron ion binding"/>
    <property type="evidence" value="ECO:0007669"/>
    <property type="project" value="UniProtKB-UniRule"/>
</dbReference>
<dbReference type="GO" id="GO:0061711">
    <property type="term" value="F:N(6)-L-threonylcarbamoyladenine synthase activity"/>
    <property type="evidence" value="ECO:0007669"/>
    <property type="project" value="UniProtKB-EC"/>
</dbReference>
<dbReference type="GO" id="GO:0002949">
    <property type="term" value="P:tRNA threonylcarbamoyladenosine modification"/>
    <property type="evidence" value="ECO:0007669"/>
    <property type="project" value="UniProtKB-UniRule"/>
</dbReference>
<dbReference type="CDD" id="cd24133">
    <property type="entry name" value="ASKHA_NBD_TsaD_bac"/>
    <property type="match status" value="1"/>
</dbReference>
<dbReference type="FunFam" id="3.30.420.40:FF:000012">
    <property type="entry name" value="tRNA N6-adenosine threonylcarbamoyltransferase"/>
    <property type="match status" value="1"/>
</dbReference>
<dbReference type="FunFam" id="3.30.420.40:FF:000040">
    <property type="entry name" value="tRNA N6-adenosine threonylcarbamoyltransferase"/>
    <property type="match status" value="1"/>
</dbReference>
<dbReference type="Gene3D" id="3.30.420.40">
    <property type="match status" value="2"/>
</dbReference>
<dbReference type="HAMAP" id="MF_01445">
    <property type="entry name" value="TsaD"/>
    <property type="match status" value="1"/>
</dbReference>
<dbReference type="InterPro" id="IPR043129">
    <property type="entry name" value="ATPase_NBD"/>
</dbReference>
<dbReference type="InterPro" id="IPR000905">
    <property type="entry name" value="Gcp-like_dom"/>
</dbReference>
<dbReference type="InterPro" id="IPR017861">
    <property type="entry name" value="KAE1/TsaD"/>
</dbReference>
<dbReference type="InterPro" id="IPR017860">
    <property type="entry name" value="Peptidase_M22_CS"/>
</dbReference>
<dbReference type="InterPro" id="IPR022450">
    <property type="entry name" value="TsaD"/>
</dbReference>
<dbReference type="NCBIfam" id="TIGR00329">
    <property type="entry name" value="gcp_kae1"/>
    <property type="match status" value="1"/>
</dbReference>
<dbReference type="NCBIfam" id="TIGR03723">
    <property type="entry name" value="T6A_TsaD_YgjD"/>
    <property type="match status" value="1"/>
</dbReference>
<dbReference type="PANTHER" id="PTHR11735">
    <property type="entry name" value="TRNA N6-ADENOSINE THREONYLCARBAMOYLTRANSFERASE"/>
    <property type="match status" value="1"/>
</dbReference>
<dbReference type="PANTHER" id="PTHR11735:SF6">
    <property type="entry name" value="TRNA N6-ADENOSINE THREONYLCARBAMOYLTRANSFERASE, MITOCHONDRIAL"/>
    <property type="match status" value="1"/>
</dbReference>
<dbReference type="Pfam" id="PF00814">
    <property type="entry name" value="TsaD"/>
    <property type="match status" value="1"/>
</dbReference>
<dbReference type="PRINTS" id="PR00789">
    <property type="entry name" value="OSIALOPTASE"/>
</dbReference>
<dbReference type="SUPFAM" id="SSF53067">
    <property type="entry name" value="Actin-like ATPase domain"/>
    <property type="match status" value="2"/>
</dbReference>
<dbReference type="PROSITE" id="PS01016">
    <property type="entry name" value="GLYCOPROTEASE"/>
    <property type="match status" value="1"/>
</dbReference>
<organism>
    <name type="scientific">Legionella pneumophila subsp. pneumophila (strain Philadelphia 1 / ATCC 33152 / DSM 7513)</name>
    <dbReference type="NCBI Taxonomy" id="272624"/>
    <lineage>
        <taxon>Bacteria</taxon>
        <taxon>Pseudomonadati</taxon>
        <taxon>Pseudomonadota</taxon>
        <taxon>Gammaproteobacteria</taxon>
        <taxon>Legionellales</taxon>
        <taxon>Legionellaceae</taxon>
        <taxon>Legionella</taxon>
    </lineage>
</organism>
<sequence length="333" mass="35864">MLVLGIESSCDETGVAVYDSESGLLSHALHSQIATHRVHGGVVPELASRDHVNYLVPLVDEVLTKAQIRKNQLDGIAYTAGPGLIGALLVGSCFAKSLAYALNIPALAIHHLEAHLLAAKMETPSLDFPFIALLVSGGHCQLIEVNNIGEYRLLGDTLDDAVGEAFDKTAKLMGIPYPGGAVLANLADQCLSTPYQFPRPMTDRPGLDFSFSGLKTHALNTWNQSEKKESDRSEIAKAFQQAVVETLIIKCKRAIKESQSKRLVVAGGVGANKALRSALQKWIKDIQGEVYFPALEYCTDNGAMVAYAGCLRMMRGEIDGGLGVIVKPRWPLA</sequence>
<gene>
    <name evidence="1" type="primary">tsaD</name>
    <name type="synonym">gcp</name>
    <name type="ordered locus">lpg2357</name>
</gene>
<evidence type="ECO:0000255" key="1">
    <source>
        <dbReference type="HAMAP-Rule" id="MF_01445"/>
    </source>
</evidence>
<protein>
    <recommendedName>
        <fullName evidence="1">tRNA N6-adenosine threonylcarbamoyltransferase</fullName>
        <ecNumber evidence="1">2.3.1.234</ecNumber>
    </recommendedName>
    <alternativeName>
        <fullName evidence="1">N6-L-threonylcarbamoyladenine synthase</fullName>
        <shortName evidence="1">t(6)A synthase</shortName>
    </alternativeName>
    <alternativeName>
        <fullName evidence="1">t(6)A37 threonylcarbamoyladenosine biosynthesis protein TsaD</fullName>
    </alternativeName>
    <alternativeName>
        <fullName evidence="1">tRNA threonylcarbamoyladenosine biosynthesis protein TsaD</fullName>
    </alternativeName>
</protein>
<name>TSAD_LEGPH</name>
<feature type="chain" id="PRO_0000303405" description="tRNA N6-adenosine threonylcarbamoyltransferase">
    <location>
        <begin position="1"/>
        <end position="333"/>
    </location>
</feature>
<feature type="binding site" evidence="1">
    <location>
        <position position="111"/>
    </location>
    <ligand>
        <name>Fe cation</name>
        <dbReference type="ChEBI" id="CHEBI:24875"/>
    </ligand>
</feature>
<feature type="binding site" evidence="1">
    <location>
        <position position="115"/>
    </location>
    <ligand>
        <name>Fe cation</name>
        <dbReference type="ChEBI" id="CHEBI:24875"/>
    </ligand>
</feature>
<feature type="binding site" evidence="1">
    <location>
        <begin position="134"/>
        <end position="138"/>
    </location>
    <ligand>
        <name>substrate</name>
    </ligand>
</feature>
<feature type="binding site" evidence="1">
    <location>
        <position position="167"/>
    </location>
    <ligand>
        <name>substrate</name>
    </ligand>
</feature>
<feature type="binding site" evidence="1">
    <location>
        <position position="180"/>
    </location>
    <ligand>
        <name>substrate</name>
    </ligand>
</feature>
<feature type="binding site" evidence="1">
    <location>
        <position position="272"/>
    </location>
    <ligand>
        <name>substrate</name>
    </ligand>
</feature>
<feature type="binding site" evidence="1">
    <location>
        <position position="300"/>
    </location>
    <ligand>
        <name>Fe cation</name>
        <dbReference type="ChEBI" id="CHEBI:24875"/>
    </ligand>
</feature>
<comment type="function">
    <text evidence="1">Required for the formation of a threonylcarbamoyl group on adenosine at position 37 (t(6)A37) in tRNAs that read codons beginning with adenine. Is involved in the transfer of the threonylcarbamoyl moiety of threonylcarbamoyl-AMP (TC-AMP) to the N6 group of A37, together with TsaE and TsaB. TsaD likely plays a direct catalytic role in this reaction.</text>
</comment>
<comment type="catalytic activity">
    <reaction evidence="1">
        <text>L-threonylcarbamoyladenylate + adenosine(37) in tRNA = N(6)-L-threonylcarbamoyladenosine(37) in tRNA + AMP + H(+)</text>
        <dbReference type="Rhea" id="RHEA:37059"/>
        <dbReference type="Rhea" id="RHEA-COMP:10162"/>
        <dbReference type="Rhea" id="RHEA-COMP:10163"/>
        <dbReference type="ChEBI" id="CHEBI:15378"/>
        <dbReference type="ChEBI" id="CHEBI:73682"/>
        <dbReference type="ChEBI" id="CHEBI:74411"/>
        <dbReference type="ChEBI" id="CHEBI:74418"/>
        <dbReference type="ChEBI" id="CHEBI:456215"/>
        <dbReference type="EC" id="2.3.1.234"/>
    </reaction>
</comment>
<comment type="cofactor">
    <cofactor evidence="1">
        <name>Fe(2+)</name>
        <dbReference type="ChEBI" id="CHEBI:29033"/>
    </cofactor>
    <text evidence="1">Binds 1 Fe(2+) ion per subunit.</text>
</comment>
<comment type="subcellular location">
    <subcellularLocation>
        <location evidence="1">Cytoplasm</location>
    </subcellularLocation>
</comment>
<comment type="similarity">
    <text evidence="1">Belongs to the KAE1 / TsaD family.</text>
</comment>
<reference key="1">
    <citation type="journal article" date="2004" name="Science">
        <title>The genomic sequence of the accidental pathogen Legionella pneumophila.</title>
        <authorList>
            <person name="Chien M."/>
            <person name="Morozova I."/>
            <person name="Shi S."/>
            <person name="Sheng H."/>
            <person name="Chen J."/>
            <person name="Gomez S.M."/>
            <person name="Asamani G."/>
            <person name="Hill K."/>
            <person name="Nuara J."/>
            <person name="Feder M."/>
            <person name="Rineer J."/>
            <person name="Greenberg J.J."/>
            <person name="Steshenko V."/>
            <person name="Park S.H."/>
            <person name="Zhao B."/>
            <person name="Teplitskaya E."/>
            <person name="Edwards J.R."/>
            <person name="Pampou S."/>
            <person name="Georghiou A."/>
            <person name="Chou I.-C."/>
            <person name="Iannuccilli W."/>
            <person name="Ulz M.E."/>
            <person name="Kim D.H."/>
            <person name="Geringer-Sameth A."/>
            <person name="Goldsberry C."/>
            <person name="Morozov P."/>
            <person name="Fischer S.G."/>
            <person name="Segal G."/>
            <person name="Qu X."/>
            <person name="Rzhetsky A."/>
            <person name="Zhang P."/>
            <person name="Cayanis E."/>
            <person name="De Jong P.J."/>
            <person name="Ju J."/>
            <person name="Kalachikov S."/>
            <person name="Shuman H.A."/>
            <person name="Russo J.J."/>
        </authorList>
    </citation>
    <scope>NUCLEOTIDE SEQUENCE [LARGE SCALE GENOMIC DNA]</scope>
    <source>
        <strain>Philadelphia 1 / ATCC 33152 / DSM 7513</strain>
    </source>
</reference>
<accession>Q5ZT08</accession>
<proteinExistence type="inferred from homology"/>
<keyword id="KW-0012">Acyltransferase</keyword>
<keyword id="KW-0963">Cytoplasm</keyword>
<keyword id="KW-0408">Iron</keyword>
<keyword id="KW-0479">Metal-binding</keyword>
<keyword id="KW-1185">Reference proteome</keyword>
<keyword id="KW-0808">Transferase</keyword>
<keyword id="KW-0819">tRNA processing</keyword>